<dbReference type="EC" id="3.4.23.36" evidence="1"/>
<dbReference type="EMBL" id="CP000436">
    <property type="protein sequence ID" value="ABI24463.1"/>
    <property type="molecule type" value="Genomic_DNA"/>
</dbReference>
<dbReference type="SMR" id="Q0I1V9"/>
<dbReference type="KEGG" id="hso:HS_0185"/>
<dbReference type="eggNOG" id="COG0597">
    <property type="taxonomic scope" value="Bacteria"/>
</dbReference>
<dbReference type="HOGENOM" id="CLU_083252_4_0_6"/>
<dbReference type="UniPathway" id="UPA00665"/>
<dbReference type="GO" id="GO:0005886">
    <property type="term" value="C:plasma membrane"/>
    <property type="evidence" value="ECO:0007669"/>
    <property type="project" value="UniProtKB-SubCell"/>
</dbReference>
<dbReference type="GO" id="GO:0004190">
    <property type="term" value="F:aspartic-type endopeptidase activity"/>
    <property type="evidence" value="ECO:0007669"/>
    <property type="project" value="UniProtKB-UniRule"/>
</dbReference>
<dbReference type="GO" id="GO:0006508">
    <property type="term" value="P:proteolysis"/>
    <property type="evidence" value="ECO:0007669"/>
    <property type="project" value="UniProtKB-KW"/>
</dbReference>
<dbReference type="HAMAP" id="MF_00161">
    <property type="entry name" value="LspA"/>
    <property type="match status" value="1"/>
</dbReference>
<dbReference type="InterPro" id="IPR001872">
    <property type="entry name" value="Peptidase_A8"/>
</dbReference>
<dbReference type="NCBIfam" id="TIGR00077">
    <property type="entry name" value="lspA"/>
    <property type="match status" value="1"/>
</dbReference>
<dbReference type="PANTHER" id="PTHR33695">
    <property type="entry name" value="LIPOPROTEIN SIGNAL PEPTIDASE"/>
    <property type="match status" value="1"/>
</dbReference>
<dbReference type="PANTHER" id="PTHR33695:SF1">
    <property type="entry name" value="LIPOPROTEIN SIGNAL PEPTIDASE"/>
    <property type="match status" value="1"/>
</dbReference>
<dbReference type="Pfam" id="PF01252">
    <property type="entry name" value="Peptidase_A8"/>
    <property type="match status" value="1"/>
</dbReference>
<dbReference type="PRINTS" id="PR00781">
    <property type="entry name" value="LIPOSIGPTASE"/>
</dbReference>
<keyword id="KW-0064">Aspartyl protease</keyword>
<keyword id="KW-0997">Cell inner membrane</keyword>
<keyword id="KW-1003">Cell membrane</keyword>
<keyword id="KW-0378">Hydrolase</keyword>
<keyword id="KW-0472">Membrane</keyword>
<keyword id="KW-0645">Protease</keyword>
<keyword id="KW-0812">Transmembrane</keyword>
<keyword id="KW-1133">Transmembrane helix</keyword>
<sequence>MNLSKTGLPFLWISAVAFFTDLITKLAVVKNFSLYESINILPFFNLTYVRNHGAAFSFLADHAGWQKYFFILLALVVSFMILFFLYKNQATQKLQNTGYALMVGGALANAADRAYHGFVVDFFDFYWQQWHYPVFNIADVAICIGAGLLAIDAFKQNDKKESKQN</sequence>
<gene>
    <name evidence="1" type="primary">lspA</name>
    <name type="ordered locus">HS_0185</name>
</gene>
<protein>
    <recommendedName>
        <fullName evidence="1">Lipoprotein signal peptidase</fullName>
        <ecNumber evidence="1">3.4.23.36</ecNumber>
    </recommendedName>
    <alternativeName>
        <fullName evidence="1">Prolipoprotein signal peptidase</fullName>
    </alternativeName>
    <alternativeName>
        <fullName evidence="1">Signal peptidase II</fullName>
        <shortName evidence="1">SPase II</shortName>
    </alternativeName>
</protein>
<reference key="1">
    <citation type="journal article" date="2007" name="J. Bacteriol.">
        <title>Complete genome sequence of Haemophilus somnus (Histophilus somni) strain 129Pt and comparison to Haemophilus ducreyi 35000HP and Haemophilus influenzae Rd.</title>
        <authorList>
            <person name="Challacombe J.F."/>
            <person name="Duncan A.J."/>
            <person name="Brettin T.S."/>
            <person name="Bruce D."/>
            <person name="Chertkov O."/>
            <person name="Detter J.C."/>
            <person name="Han C.S."/>
            <person name="Misra M."/>
            <person name="Richardson P."/>
            <person name="Tapia R."/>
            <person name="Thayer N."/>
            <person name="Xie G."/>
            <person name="Inzana T.J."/>
        </authorList>
    </citation>
    <scope>NUCLEOTIDE SEQUENCE [LARGE SCALE GENOMIC DNA]</scope>
    <source>
        <strain>129Pt</strain>
    </source>
</reference>
<evidence type="ECO:0000255" key="1">
    <source>
        <dbReference type="HAMAP-Rule" id="MF_00161"/>
    </source>
</evidence>
<organism>
    <name type="scientific">Histophilus somni (strain 129Pt)</name>
    <name type="common">Haemophilus somnus</name>
    <dbReference type="NCBI Taxonomy" id="205914"/>
    <lineage>
        <taxon>Bacteria</taxon>
        <taxon>Pseudomonadati</taxon>
        <taxon>Pseudomonadota</taxon>
        <taxon>Gammaproteobacteria</taxon>
        <taxon>Pasteurellales</taxon>
        <taxon>Pasteurellaceae</taxon>
        <taxon>Histophilus</taxon>
    </lineage>
</organism>
<comment type="function">
    <text evidence="1">This protein specifically catalyzes the removal of signal peptides from prolipoproteins.</text>
</comment>
<comment type="catalytic activity">
    <reaction evidence="1">
        <text>Release of signal peptides from bacterial membrane prolipoproteins. Hydrolyzes -Xaa-Yaa-Zaa-|-(S,diacylglyceryl)Cys-, in which Xaa is hydrophobic (preferably Leu), and Yaa (Ala or Ser) and Zaa (Gly or Ala) have small, neutral side chains.</text>
        <dbReference type="EC" id="3.4.23.36"/>
    </reaction>
</comment>
<comment type="pathway">
    <text evidence="1">Protein modification; lipoprotein biosynthesis (signal peptide cleavage).</text>
</comment>
<comment type="subcellular location">
    <subcellularLocation>
        <location evidence="1">Cell inner membrane</location>
        <topology evidence="1">Multi-pass membrane protein</topology>
    </subcellularLocation>
</comment>
<comment type="similarity">
    <text evidence="1">Belongs to the peptidase A8 family.</text>
</comment>
<accession>Q0I1V9</accession>
<name>LSPA_HISS1</name>
<proteinExistence type="inferred from homology"/>
<feature type="chain" id="PRO_0000289389" description="Lipoprotein signal peptidase">
    <location>
        <begin position="1"/>
        <end position="165"/>
    </location>
</feature>
<feature type="transmembrane region" description="Helical" evidence="1">
    <location>
        <begin position="9"/>
        <end position="29"/>
    </location>
</feature>
<feature type="transmembrane region" description="Helical" evidence="1">
    <location>
        <begin position="65"/>
        <end position="85"/>
    </location>
</feature>
<feature type="transmembrane region" description="Helical" evidence="1">
    <location>
        <begin position="97"/>
        <end position="119"/>
    </location>
</feature>
<feature type="transmembrane region" description="Helical" evidence="1">
    <location>
        <begin position="134"/>
        <end position="154"/>
    </location>
</feature>
<feature type="active site" evidence="1">
    <location>
        <position position="121"/>
    </location>
</feature>
<feature type="active site" evidence="1">
    <location>
        <position position="139"/>
    </location>
</feature>